<name>CLPS_CHRVO</name>
<organism>
    <name type="scientific">Chromobacterium violaceum (strain ATCC 12472 / DSM 30191 / JCM 1249 / CCUG 213 / NBRC 12614 / NCIMB 9131 / NCTC 9757 / MK)</name>
    <dbReference type="NCBI Taxonomy" id="243365"/>
    <lineage>
        <taxon>Bacteria</taxon>
        <taxon>Pseudomonadati</taxon>
        <taxon>Pseudomonadota</taxon>
        <taxon>Betaproteobacteria</taxon>
        <taxon>Neisseriales</taxon>
        <taxon>Chromobacteriaceae</taxon>
        <taxon>Chromobacterium</taxon>
    </lineage>
</organism>
<feature type="chain" id="PRO_0000215699" description="ATP-dependent Clp protease adapter protein ClpS">
    <location>
        <begin position="1"/>
        <end position="106"/>
    </location>
</feature>
<feature type="region of interest" description="Disordered" evidence="2">
    <location>
        <begin position="1"/>
        <end position="20"/>
    </location>
</feature>
<protein>
    <recommendedName>
        <fullName evidence="1">ATP-dependent Clp protease adapter protein ClpS</fullName>
    </recommendedName>
</protein>
<keyword id="KW-1185">Reference proteome</keyword>
<accession>Q7NRW1</accession>
<sequence>MKVDMSTSVKDDAQLEASRVRENPPPMYKVLLLNDDFTPMDFVVQVLQQFFHMNREKATHIMLQVHTQGHGVCGVYTKDVAATKVEQVLQYAKAHQHPLQCVMEEN</sequence>
<comment type="function">
    <text evidence="1">Involved in the modulation of the specificity of the ClpAP-mediated ATP-dependent protein degradation.</text>
</comment>
<comment type="subunit">
    <text evidence="1">Binds to the N-terminal domain of the chaperone ClpA.</text>
</comment>
<comment type="similarity">
    <text evidence="1">Belongs to the ClpS family.</text>
</comment>
<dbReference type="EMBL" id="AE016825">
    <property type="protein sequence ID" value="AAQ61330.1"/>
    <property type="molecule type" value="Genomic_DNA"/>
</dbReference>
<dbReference type="SMR" id="Q7NRW1"/>
<dbReference type="STRING" id="243365.CV_3668"/>
<dbReference type="KEGG" id="cvi:CV_3668"/>
<dbReference type="eggNOG" id="COG2127">
    <property type="taxonomic scope" value="Bacteria"/>
</dbReference>
<dbReference type="HOGENOM" id="CLU_134358_2_1_4"/>
<dbReference type="Proteomes" id="UP000001424">
    <property type="component" value="Chromosome"/>
</dbReference>
<dbReference type="GO" id="GO:0030163">
    <property type="term" value="P:protein catabolic process"/>
    <property type="evidence" value="ECO:0007669"/>
    <property type="project" value="InterPro"/>
</dbReference>
<dbReference type="GO" id="GO:0006508">
    <property type="term" value="P:proteolysis"/>
    <property type="evidence" value="ECO:0007669"/>
    <property type="project" value="UniProtKB-UniRule"/>
</dbReference>
<dbReference type="FunFam" id="3.30.1390.10:FF:000002">
    <property type="entry name" value="ATP-dependent Clp protease adapter protein ClpS"/>
    <property type="match status" value="1"/>
</dbReference>
<dbReference type="Gene3D" id="3.30.1390.10">
    <property type="match status" value="1"/>
</dbReference>
<dbReference type="HAMAP" id="MF_00302">
    <property type="entry name" value="ClpS"/>
    <property type="match status" value="1"/>
</dbReference>
<dbReference type="InterPro" id="IPR022935">
    <property type="entry name" value="ClpS"/>
</dbReference>
<dbReference type="InterPro" id="IPR003769">
    <property type="entry name" value="ClpS_core"/>
</dbReference>
<dbReference type="InterPro" id="IPR014719">
    <property type="entry name" value="Ribosomal_bL12_C/ClpS-like"/>
</dbReference>
<dbReference type="NCBIfam" id="NF000669">
    <property type="entry name" value="PRK00033.1-2"/>
    <property type="match status" value="1"/>
</dbReference>
<dbReference type="NCBIfam" id="NF000672">
    <property type="entry name" value="PRK00033.1-5"/>
    <property type="match status" value="1"/>
</dbReference>
<dbReference type="PANTHER" id="PTHR33473:SF19">
    <property type="entry name" value="ATP-DEPENDENT CLP PROTEASE ADAPTER PROTEIN CLPS"/>
    <property type="match status" value="1"/>
</dbReference>
<dbReference type="PANTHER" id="PTHR33473">
    <property type="entry name" value="ATP-DEPENDENT CLP PROTEASE ADAPTER PROTEIN CLPS1, CHLOROPLASTIC"/>
    <property type="match status" value="1"/>
</dbReference>
<dbReference type="Pfam" id="PF02617">
    <property type="entry name" value="ClpS"/>
    <property type="match status" value="1"/>
</dbReference>
<dbReference type="SUPFAM" id="SSF54736">
    <property type="entry name" value="ClpS-like"/>
    <property type="match status" value="1"/>
</dbReference>
<reference key="1">
    <citation type="journal article" date="2003" name="Proc. Natl. Acad. Sci. U.S.A.">
        <title>The complete genome sequence of Chromobacterium violaceum reveals remarkable and exploitable bacterial adaptability.</title>
        <authorList>
            <person name="Vasconcelos A.T.R."/>
            <person name="de Almeida D.F."/>
            <person name="Hungria M."/>
            <person name="Guimaraes C.T."/>
            <person name="Antonio R.V."/>
            <person name="Almeida F.C."/>
            <person name="de Almeida L.G.P."/>
            <person name="de Almeida R."/>
            <person name="Alves-Gomes J.A."/>
            <person name="Andrade E.M."/>
            <person name="Araripe J."/>
            <person name="de Araujo M.F.F."/>
            <person name="Astolfi-Filho S."/>
            <person name="Azevedo V."/>
            <person name="Baptista A.J."/>
            <person name="Bataus L.A.M."/>
            <person name="Batista J.S."/>
            <person name="Belo A."/>
            <person name="van den Berg C."/>
            <person name="Bogo M."/>
            <person name="Bonatto S."/>
            <person name="Bordignon J."/>
            <person name="Brigido M.M."/>
            <person name="Brito C.A."/>
            <person name="Brocchi M."/>
            <person name="Burity H.A."/>
            <person name="Camargo A.A."/>
            <person name="Cardoso D.D.P."/>
            <person name="Carneiro N.P."/>
            <person name="Carraro D.M."/>
            <person name="Carvalho C.M.B."/>
            <person name="Cascardo J.C.M."/>
            <person name="Cavada B.S."/>
            <person name="Chueire L.M.O."/>
            <person name="Creczynski-Pasa T.B."/>
            <person name="Cunha-Junior N.C."/>
            <person name="Fagundes N."/>
            <person name="Falcao C.L."/>
            <person name="Fantinatti F."/>
            <person name="Farias I.P."/>
            <person name="Felipe M.S.S."/>
            <person name="Ferrari L.P."/>
            <person name="Ferro J.A."/>
            <person name="Ferro M.I.T."/>
            <person name="Franco G.R."/>
            <person name="Freitas N.S.A."/>
            <person name="Furlan L.R."/>
            <person name="Gazzinelli R.T."/>
            <person name="Gomes E.A."/>
            <person name="Goncalves P.R."/>
            <person name="Grangeiro T.B."/>
            <person name="Grattapaglia D."/>
            <person name="Grisard E.C."/>
            <person name="Hanna E.S."/>
            <person name="Jardim S.N."/>
            <person name="Laurino J."/>
            <person name="Leoi L.C.T."/>
            <person name="Lima L.F.A."/>
            <person name="Loureiro M.F."/>
            <person name="Lyra M.C.C.P."/>
            <person name="Madeira H.M.F."/>
            <person name="Manfio G.P."/>
            <person name="Maranhao A.Q."/>
            <person name="Martins W.S."/>
            <person name="di Mauro S.M.Z."/>
            <person name="de Medeiros S.R.B."/>
            <person name="Meissner R.V."/>
            <person name="Moreira M.A.M."/>
            <person name="Nascimento F.F."/>
            <person name="Nicolas M.F."/>
            <person name="Oliveira J.G."/>
            <person name="Oliveira S.C."/>
            <person name="Paixao R.F.C."/>
            <person name="Parente J.A."/>
            <person name="Pedrosa F.O."/>
            <person name="Pena S.D.J."/>
            <person name="Pereira J.O."/>
            <person name="Pereira M."/>
            <person name="Pinto L.S.R.C."/>
            <person name="Pinto L.S."/>
            <person name="Porto J.I.R."/>
            <person name="Potrich D.P."/>
            <person name="Ramalho-Neto C.E."/>
            <person name="Reis A.M.M."/>
            <person name="Rigo L.U."/>
            <person name="Rondinelli E."/>
            <person name="Santos E.B.P."/>
            <person name="Santos F.R."/>
            <person name="Schneider M.P.C."/>
            <person name="Seuanez H.N."/>
            <person name="Silva A.M.R."/>
            <person name="da Silva A.L.C."/>
            <person name="Silva D.W."/>
            <person name="Silva R."/>
            <person name="Simoes I.C."/>
            <person name="Simon D."/>
            <person name="Soares C.M.A."/>
            <person name="Soares R.B.A."/>
            <person name="Souza E.M."/>
            <person name="Souza K.R.L."/>
            <person name="Souza R.C."/>
            <person name="Steffens M.B.R."/>
            <person name="Steindel M."/>
            <person name="Teixeira S.R."/>
            <person name="Urmenyi T."/>
            <person name="Vettore A."/>
            <person name="Wassem R."/>
            <person name="Zaha A."/>
            <person name="Simpson A.J.G."/>
        </authorList>
    </citation>
    <scope>NUCLEOTIDE SEQUENCE [LARGE SCALE GENOMIC DNA]</scope>
    <source>
        <strain>ATCC 12472 / DSM 30191 / JCM 1249 / CCUG 213 / NBRC 12614 / NCIMB 9131 / NCTC 9757 / MK</strain>
    </source>
</reference>
<proteinExistence type="inferred from homology"/>
<evidence type="ECO:0000255" key="1">
    <source>
        <dbReference type="HAMAP-Rule" id="MF_00302"/>
    </source>
</evidence>
<evidence type="ECO:0000256" key="2">
    <source>
        <dbReference type="SAM" id="MobiDB-lite"/>
    </source>
</evidence>
<gene>
    <name evidence="1" type="primary">clpS</name>
    <name type="ordered locus">CV_3668</name>
</gene>